<comment type="function">
    <text evidence="3 4">Probable transcription factor (PubMed:20005870, PubMed:24885717). Involved in vulval organogenesis (PubMed:20005870, PubMed:24885717). During vulval development, may play a role in the regulation of cell cycle regulators such as cul-1 (PubMed:20005870). Positively modulates expression of homeobox protein lin-39, perhaps by binding to regulatory regions of the lin-39 gene, acting in the vulval lineage (PubMed:24885717). Plays a role in larval molting (PubMed:20005870).</text>
</comment>
<comment type="subcellular location">
    <subcellularLocation>
        <location evidence="5">Nucleus</location>
    </subcellularLocation>
</comment>
<comment type="tissue specificity">
    <text evidence="3">Expressed in neuronal cell bodies in the ventral cord and HSN neurons.</text>
</comment>
<comment type="developmental stage">
    <text evidence="3">Expressed in the lateral hypodermal (seam) cells and occasionally in the hyp7 hypodermal cell during the larval stages of development with increased expression during the molting phase between the L3 and L4 stages of larval development. Also expressed in the vulval precursor cell desecendents of P5.p, P6.p and P7.p cells.</text>
</comment>
<comment type="disruption phenotype">
    <text evidence="3 4">RNAi-mediated knockdown results in an egg-laying defect and vulval cell-lineage defects including failed division of vulval precursor cell descendents (PubMed:20005870). RNAi-mediated knockdown causes a decrease in expression of lin-39 at the larval L3 stage (PubMed:24885717). Knockdown in L1 stage larvae, in a lin-39 mutant background, causes abnormal fusion of vulval precursor cells at larval stage L2 (PubMed:24885717).</text>
</comment>
<evidence type="ECO:0000255" key="1">
    <source>
        <dbReference type="PROSITE-ProRule" id="PRU00027"/>
    </source>
</evidence>
<evidence type="ECO:0000256" key="2">
    <source>
        <dbReference type="SAM" id="MobiDB-lite"/>
    </source>
</evidence>
<evidence type="ECO:0000269" key="3">
    <source>
    </source>
</evidence>
<evidence type="ECO:0000269" key="4">
    <source>
    </source>
</evidence>
<evidence type="ECO:0000305" key="5"/>
<evidence type="ECO:0000312" key="6">
    <source>
        <dbReference type="Proteomes" id="UP000001940"/>
    </source>
</evidence>
<evidence type="ECO:0000312" key="7">
    <source>
        <dbReference type="WormBase" id="F25H8.6"/>
    </source>
</evidence>
<sequence>MQTQSPFGPLLGISSSLLPSPVTVAAAAAAANGHQGPVSLTTFPSAFAAFASQIRNNQLQSLLQSQIQALNGGMGSPGNGPGTPLSRNNYAHHHQQHQNQQHVGKIRGTTEYPLRKRVGGSTVKTAKVWRYFDELPTIEQAAECRICRKKIKATNSSTTGMIRHLRSCHVQEYQLVQEARQNSMIVKMEEKARAKLLREMNEKVITNGIENTPIVKKESQTESQKSPSASSSASDTASSASSSHFSTNPLIGLPAPVAIKPPAPPTPSNSILNLSQSQNQCQNQNPMFQSQNIKNEPTDVEEEDLEQKRSRDILHRPSDLGTKMFFSSPRTFNLTSAFSSITPLEDHKFQKKIEDDHKIHMQIALMLLLDQQPCQIIDRPGIRSLFKFVLPEYHMPSGDVFQATIVPQLLNQMKQQIEALVHNSSSLSSIPDQVMTSSSATSSYEDVSVNESQMAGPNVGDEEEEIMEEEVEEDENVEIEDDTSSASSSIDTDTCDAMASFIHFIGNDAFPHDELISLLSVVTNLFTYFSTRPHVQTHLQMTIIQPTSQPLVQQVQFVTSNLSIISDYIRQTPDMQLLPLAVNQEAMLEKLVDHIDQLV</sequence>
<protein>
    <recommendedName>
        <fullName evidence="5">Zinc finger BED domain-containing protein 3</fullName>
    </recommendedName>
</protein>
<feature type="chain" id="PRO_0000436480" description="Zinc finger BED domain-containing protein 3" evidence="5">
    <location>
        <begin position="1"/>
        <end position="599"/>
    </location>
</feature>
<feature type="zinc finger region" description="BED-type" evidence="1">
    <location>
        <begin position="123"/>
        <end position="176"/>
    </location>
</feature>
<feature type="region of interest" description="Disordered" evidence="2">
    <location>
        <begin position="70"/>
        <end position="104"/>
    </location>
</feature>
<feature type="region of interest" description="Disordered" evidence="2">
    <location>
        <begin position="208"/>
        <end position="283"/>
    </location>
</feature>
<feature type="region of interest" description="Disordered" evidence="2">
    <location>
        <begin position="440"/>
        <end position="491"/>
    </location>
</feature>
<feature type="compositionally biased region" description="Gly residues" evidence="2">
    <location>
        <begin position="72"/>
        <end position="81"/>
    </location>
</feature>
<feature type="compositionally biased region" description="Low complexity" evidence="2">
    <location>
        <begin position="223"/>
        <end position="246"/>
    </location>
</feature>
<feature type="compositionally biased region" description="Low complexity" evidence="2">
    <location>
        <begin position="268"/>
        <end position="283"/>
    </location>
</feature>
<feature type="compositionally biased region" description="Polar residues" evidence="2">
    <location>
        <begin position="440"/>
        <end position="455"/>
    </location>
</feature>
<feature type="compositionally biased region" description="Acidic residues" evidence="2">
    <location>
        <begin position="460"/>
        <end position="483"/>
    </location>
</feature>
<feature type="binding site" evidence="1">
    <location>
        <position position="144"/>
    </location>
    <ligand>
        <name>Zn(2+)</name>
        <dbReference type="ChEBI" id="CHEBI:29105"/>
    </ligand>
</feature>
<feature type="binding site" evidence="1">
    <location>
        <position position="147"/>
    </location>
    <ligand>
        <name>Zn(2+)</name>
        <dbReference type="ChEBI" id="CHEBI:29105"/>
    </ligand>
</feature>
<feature type="binding site" evidence="1">
    <location>
        <position position="164"/>
    </location>
    <ligand>
        <name>Zn(2+)</name>
        <dbReference type="ChEBI" id="CHEBI:29105"/>
    </ligand>
</feature>
<feature type="binding site" evidence="1">
    <location>
        <position position="169"/>
    </location>
    <ligand>
        <name>Zn(2+)</name>
        <dbReference type="ChEBI" id="CHEBI:29105"/>
    </ligand>
</feature>
<feature type="mutagenesis site" description="In sy702; causes decrease in lin-39 expression in L3 larvae." evidence="4">
    <location>
        <begin position="371"/>
        <end position="599"/>
    </location>
</feature>
<gene>
    <name evidence="7" type="primary">bed-3</name>
    <name evidence="7" type="ORF">F25H8.6</name>
</gene>
<reference evidence="6" key="1">
    <citation type="journal article" date="1998" name="Science">
        <title>Genome sequence of the nematode C. elegans: a platform for investigating biology.</title>
        <authorList>
            <consortium name="The C. elegans sequencing consortium"/>
        </authorList>
    </citation>
    <scope>NUCLEOTIDE SEQUENCE [LARGE SCALE GENOMIC DNA]</scope>
    <source>
        <strain evidence="6">Bristol N2</strain>
    </source>
</reference>
<reference evidence="5" key="2">
    <citation type="journal article" date="2010" name="Dev. Biol.">
        <title>C. elegans BED domain transcription factor BED-3 controls lineage-specific cell proliferation during organogenesis.</title>
        <authorList>
            <person name="Inoue T."/>
            <person name="Sternberg P.W."/>
        </authorList>
    </citation>
    <scope>FUNCTION</scope>
    <scope>TISSUE SPECIFICITY</scope>
    <scope>DEVELOPMENTAL STAGE</scope>
    <scope>DISRUPTION PHENOTYPE</scope>
</reference>
<reference evidence="5" key="3">
    <citation type="journal article" date="2014" name="BMC Dev. Biol.">
        <title>Multiple transcription factors directly regulate Hox gene lin-39 expression in ventral hypodermal cells of the C. elegans embryo and larva, including the hypodermal fate regulators LIN-26 and ELT-6.</title>
        <authorList>
            <person name="Liu W.J."/>
            <person name="Reece-Hoyes J.S."/>
            <person name="Walhout A.J."/>
            <person name="Eisenmann D.M."/>
        </authorList>
    </citation>
    <scope>FUNCTION</scope>
    <scope>DISRUPTION PHENOTYPE</scope>
    <scope>MUTAGENESIS OF 371-GLN--VAL-599</scope>
</reference>
<name>BED3_CAEEL</name>
<dbReference type="EMBL" id="BX284604">
    <property type="protein sequence ID" value="CAA93282.1"/>
    <property type="molecule type" value="Genomic_DNA"/>
</dbReference>
<dbReference type="PIR" id="T21366">
    <property type="entry name" value="T21366"/>
</dbReference>
<dbReference type="RefSeq" id="NP_501785.1">
    <property type="nucleotide sequence ID" value="NM_069384.6"/>
</dbReference>
<dbReference type="FunCoup" id="Q19787">
    <property type="interactions" value="359"/>
</dbReference>
<dbReference type="STRING" id="6239.F25H8.6.1"/>
<dbReference type="PaxDb" id="6239-F25H8.6"/>
<dbReference type="EnsemblMetazoa" id="F25H8.6.1">
    <property type="protein sequence ID" value="F25H8.6.1"/>
    <property type="gene ID" value="WBGene00009133"/>
</dbReference>
<dbReference type="GeneID" id="184940"/>
<dbReference type="KEGG" id="cel:CELE_F25H8.6"/>
<dbReference type="UCSC" id="F25H8.6">
    <property type="organism name" value="c. elegans"/>
</dbReference>
<dbReference type="AGR" id="WB:WBGene00009133"/>
<dbReference type="CTD" id="184940"/>
<dbReference type="WormBase" id="F25H8.6">
    <property type="protein sequence ID" value="CE05731"/>
    <property type="gene ID" value="WBGene00009133"/>
    <property type="gene designation" value="bed-3"/>
</dbReference>
<dbReference type="eggNOG" id="KOG1121">
    <property type="taxonomic scope" value="Eukaryota"/>
</dbReference>
<dbReference type="HOGENOM" id="CLU_447081_0_0_1"/>
<dbReference type="InParanoid" id="Q19787"/>
<dbReference type="OMA" id="WPDDHPD"/>
<dbReference type="OrthoDB" id="117690at2759"/>
<dbReference type="Reactome" id="R-CEL-4551638">
    <property type="pathway name" value="SUMOylation of chromatin organization proteins"/>
</dbReference>
<dbReference type="PRO" id="PR:Q19787"/>
<dbReference type="Proteomes" id="UP000001940">
    <property type="component" value="Chromosome IV"/>
</dbReference>
<dbReference type="Bgee" id="WBGene00009133">
    <property type="expression patterns" value="Expressed in pharyngeal muscle cell (C elegans) and 10 other cell types or tissues"/>
</dbReference>
<dbReference type="GO" id="GO:0005634">
    <property type="term" value="C:nucleus"/>
    <property type="evidence" value="ECO:0000318"/>
    <property type="project" value="GO_Central"/>
</dbReference>
<dbReference type="GO" id="GO:0000977">
    <property type="term" value="F:RNA polymerase II transcription regulatory region sequence-specific DNA binding"/>
    <property type="evidence" value="ECO:0000314"/>
    <property type="project" value="WormBase"/>
</dbReference>
<dbReference type="GO" id="GO:0008270">
    <property type="term" value="F:zinc ion binding"/>
    <property type="evidence" value="ECO:0007669"/>
    <property type="project" value="UniProtKB-KW"/>
</dbReference>
<dbReference type="GO" id="GO:0018996">
    <property type="term" value="P:molting cycle, collagen and cuticulin-based cuticle"/>
    <property type="evidence" value="ECO:0000315"/>
    <property type="project" value="WormBase"/>
</dbReference>
<dbReference type="GO" id="GO:0051302">
    <property type="term" value="P:regulation of cell division"/>
    <property type="evidence" value="ECO:0000315"/>
    <property type="project" value="WormBase"/>
</dbReference>
<dbReference type="GO" id="GO:0006357">
    <property type="term" value="P:regulation of transcription by RNA polymerase II"/>
    <property type="evidence" value="ECO:0000318"/>
    <property type="project" value="GO_Central"/>
</dbReference>
<dbReference type="GO" id="GO:0072327">
    <property type="term" value="P:vulval cell fate specification"/>
    <property type="evidence" value="ECO:0000315"/>
    <property type="project" value="WormBase"/>
</dbReference>
<dbReference type="InterPro" id="IPR003656">
    <property type="entry name" value="Znf_BED"/>
</dbReference>
<dbReference type="InterPro" id="IPR052035">
    <property type="entry name" value="ZnF_BED_domain_contain"/>
</dbReference>
<dbReference type="InterPro" id="IPR036236">
    <property type="entry name" value="Znf_C2H2_sf"/>
</dbReference>
<dbReference type="PANTHER" id="PTHR46481:SF10">
    <property type="entry name" value="ZINC FINGER BED DOMAIN-CONTAINING PROTEIN 39"/>
    <property type="match status" value="1"/>
</dbReference>
<dbReference type="PANTHER" id="PTHR46481">
    <property type="entry name" value="ZINC FINGER BED DOMAIN-CONTAINING PROTEIN 4"/>
    <property type="match status" value="1"/>
</dbReference>
<dbReference type="Pfam" id="PF02892">
    <property type="entry name" value="zf-BED"/>
    <property type="match status" value="1"/>
</dbReference>
<dbReference type="SMART" id="SM00614">
    <property type="entry name" value="ZnF_BED"/>
    <property type="match status" value="1"/>
</dbReference>
<dbReference type="SUPFAM" id="SSF57667">
    <property type="entry name" value="beta-beta-alpha zinc fingers"/>
    <property type="match status" value="1"/>
</dbReference>
<dbReference type="PROSITE" id="PS50808">
    <property type="entry name" value="ZF_BED"/>
    <property type="match status" value="1"/>
</dbReference>
<organism evidence="6">
    <name type="scientific">Caenorhabditis elegans</name>
    <dbReference type="NCBI Taxonomy" id="6239"/>
    <lineage>
        <taxon>Eukaryota</taxon>
        <taxon>Metazoa</taxon>
        <taxon>Ecdysozoa</taxon>
        <taxon>Nematoda</taxon>
        <taxon>Chromadorea</taxon>
        <taxon>Rhabditida</taxon>
        <taxon>Rhabditina</taxon>
        <taxon>Rhabditomorpha</taxon>
        <taxon>Rhabditoidea</taxon>
        <taxon>Rhabditidae</taxon>
        <taxon>Peloderinae</taxon>
        <taxon>Caenorhabditis</taxon>
    </lineage>
</organism>
<accession>Q19787</accession>
<keyword id="KW-0217">Developmental protein</keyword>
<keyword id="KW-0479">Metal-binding</keyword>
<keyword id="KW-0539">Nucleus</keyword>
<keyword id="KW-1185">Reference proteome</keyword>
<keyword id="KW-0804">Transcription</keyword>
<keyword id="KW-0805">Transcription regulation</keyword>
<keyword id="KW-0862">Zinc</keyword>
<keyword id="KW-0863">Zinc-finger</keyword>
<proteinExistence type="evidence at protein level"/>